<dbReference type="EC" id="3.6.4.13" evidence="1"/>
<dbReference type="EMBL" id="DS027056">
    <property type="protein sequence ID" value="EAW09883.1"/>
    <property type="molecule type" value="Genomic_DNA"/>
</dbReference>
<dbReference type="RefSeq" id="XP_001271309.1">
    <property type="nucleotide sequence ID" value="XM_001271308.1"/>
</dbReference>
<dbReference type="SMR" id="A1CL59"/>
<dbReference type="STRING" id="344612.A1CL59"/>
<dbReference type="EnsemblFungi" id="EAW09883">
    <property type="protein sequence ID" value="EAW09883"/>
    <property type="gene ID" value="ACLA_040990"/>
</dbReference>
<dbReference type="GeneID" id="4703063"/>
<dbReference type="KEGG" id="act:ACLA_040990"/>
<dbReference type="VEuPathDB" id="FungiDB:ACLA_040990"/>
<dbReference type="eggNOG" id="KOG0345">
    <property type="taxonomic scope" value="Eukaryota"/>
</dbReference>
<dbReference type="HOGENOM" id="CLU_003041_26_4_1"/>
<dbReference type="OMA" id="AYKEHEC"/>
<dbReference type="OrthoDB" id="7396459at2759"/>
<dbReference type="Proteomes" id="UP000006701">
    <property type="component" value="Unassembled WGS sequence"/>
</dbReference>
<dbReference type="GO" id="GO:0030686">
    <property type="term" value="C:90S preribosome"/>
    <property type="evidence" value="ECO:0007669"/>
    <property type="project" value="EnsemblFungi"/>
</dbReference>
<dbReference type="GO" id="GO:0005730">
    <property type="term" value="C:nucleolus"/>
    <property type="evidence" value="ECO:0007669"/>
    <property type="project" value="UniProtKB-SubCell"/>
</dbReference>
<dbReference type="GO" id="GO:0005654">
    <property type="term" value="C:nucleoplasm"/>
    <property type="evidence" value="ECO:0007669"/>
    <property type="project" value="EnsemblFungi"/>
</dbReference>
<dbReference type="GO" id="GO:0030687">
    <property type="term" value="C:preribosome, large subunit precursor"/>
    <property type="evidence" value="ECO:0007669"/>
    <property type="project" value="EnsemblFungi"/>
</dbReference>
<dbReference type="GO" id="GO:0005524">
    <property type="term" value="F:ATP binding"/>
    <property type="evidence" value="ECO:0007669"/>
    <property type="project" value="UniProtKB-KW"/>
</dbReference>
<dbReference type="GO" id="GO:0016887">
    <property type="term" value="F:ATP hydrolysis activity"/>
    <property type="evidence" value="ECO:0007669"/>
    <property type="project" value="RHEA"/>
</dbReference>
<dbReference type="GO" id="GO:0003723">
    <property type="term" value="F:RNA binding"/>
    <property type="evidence" value="ECO:0007669"/>
    <property type="project" value="UniProtKB-KW"/>
</dbReference>
<dbReference type="GO" id="GO:0003724">
    <property type="term" value="F:RNA helicase activity"/>
    <property type="evidence" value="ECO:0007669"/>
    <property type="project" value="UniProtKB-EC"/>
</dbReference>
<dbReference type="GO" id="GO:1902626">
    <property type="term" value="P:assembly of large subunit precursor of preribosome"/>
    <property type="evidence" value="ECO:0007669"/>
    <property type="project" value="EnsemblFungi"/>
</dbReference>
<dbReference type="GO" id="GO:0000470">
    <property type="term" value="P:maturation of LSU-rRNA"/>
    <property type="evidence" value="ECO:0007669"/>
    <property type="project" value="EnsemblFungi"/>
</dbReference>
<dbReference type="CDD" id="cd17960">
    <property type="entry name" value="DEADc_DDX55"/>
    <property type="match status" value="1"/>
</dbReference>
<dbReference type="CDD" id="cd18787">
    <property type="entry name" value="SF2_C_DEAD"/>
    <property type="match status" value="1"/>
</dbReference>
<dbReference type="Gene3D" id="3.40.50.300">
    <property type="entry name" value="P-loop containing nucleotide triphosphate hydrolases"/>
    <property type="match status" value="2"/>
</dbReference>
<dbReference type="InterPro" id="IPR056330">
    <property type="entry name" value="CTT_SPB4"/>
</dbReference>
<dbReference type="InterPro" id="IPR011545">
    <property type="entry name" value="DEAD/DEAH_box_helicase_dom"/>
</dbReference>
<dbReference type="InterPro" id="IPR014001">
    <property type="entry name" value="Helicase_ATP-bd"/>
</dbReference>
<dbReference type="InterPro" id="IPR001650">
    <property type="entry name" value="Helicase_C-like"/>
</dbReference>
<dbReference type="InterPro" id="IPR027417">
    <property type="entry name" value="P-loop_NTPase"/>
</dbReference>
<dbReference type="InterPro" id="IPR000629">
    <property type="entry name" value="RNA-helicase_DEAD-box_CS"/>
</dbReference>
<dbReference type="InterPro" id="IPR014014">
    <property type="entry name" value="RNA_helicase_DEAD_Q_motif"/>
</dbReference>
<dbReference type="InterPro" id="IPR025313">
    <property type="entry name" value="SPB4-like_CTE"/>
</dbReference>
<dbReference type="PANTHER" id="PTHR24031">
    <property type="entry name" value="RNA HELICASE"/>
    <property type="match status" value="1"/>
</dbReference>
<dbReference type="Pfam" id="PF13959">
    <property type="entry name" value="CTE_SPB4"/>
    <property type="match status" value="1"/>
</dbReference>
<dbReference type="Pfam" id="PF23681">
    <property type="entry name" value="CTT_SPB4"/>
    <property type="match status" value="1"/>
</dbReference>
<dbReference type="Pfam" id="PF00270">
    <property type="entry name" value="DEAD"/>
    <property type="match status" value="1"/>
</dbReference>
<dbReference type="Pfam" id="PF00271">
    <property type="entry name" value="Helicase_C"/>
    <property type="match status" value="1"/>
</dbReference>
<dbReference type="SMART" id="SM00487">
    <property type="entry name" value="DEXDc"/>
    <property type="match status" value="1"/>
</dbReference>
<dbReference type="SMART" id="SM01178">
    <property type="entry name" value="DUF4217"/>
    <property type="match status" value="1"/>
</dbReference>
<dbReference type="SMART" id="SM00490">
    <property type="entry name" value="HELICc"/>
    <property type="match status" value="1"/>
</dbReference>
<dbReference type="SUPFAM" id="SSF52540">
    <property type="entry name" value="P-loop containing nucleoside triphosphate hydrolases"/>
    <property type="match status" value="2"/>
</dbReference>
<dbReference type="PROSITE" id="PS00039">
    <property type="entry name" value="DEAD_ATP_HELICASE"/>
    <property type="match status" value="1"/>
</dbReference>
<dbReference type="PROSITE" id="PS51192">
    <property type="entry name" value="HELICASE_ATP_BIND_1"/>
    <property type="match status" value="1"/>
</dbReference>
<dbReference type="PROSITE" id="PS51194">
    <property type="entry name" value="HELICASE_CTER"/>
    <property type="match status" value="1"/>
</dbReference>
<dbReference type="PROSITE" id="PS51195">
    <property type="entry name" value="Q_MOTIF"/>
    <property type="match status" value="1"/>
</dbReference>
<evidence type="ECO:0000250" key="1">
    <source>
        <dbReference type="UniProtKB" id="P25808"/>
    </source>
</evidence>
<evidence type="ECO:0000255" key="2"/>
<evidence type="ECO:0000255" key="3">
    <source>
        <dbReference type="PROSITE-ProRule" id="PRU00541"/>
    </source>
</evidence>
<evidence type="ECO:0000255" key="4">
    <source>
        <dbReference type="PROSITE-ProRule" id="PRU00542"/>
    </source>
</evidence>
<evidence type="ECO:0000256" key="5">
    <source>
        <dbReference type="SAM" id="MobiDB-lite"/>
    </source>
</evidence>
<evidence type="ECO:0000305" key="6"/>
<name>SPB4_ASPCL</name>
<protein>
    <recommendedName>
        <fullName evidence="6">ATP-dependent rRNA helicase spb4</fullName>
        <ecNumber evidence="1">3.6.4.13</ecNumber>
    </recommendedName>
</protein>
<accession>A1CL59</accession>
<sequence length="639" mass="71052">MAPNPPKGTSSRAWDAVTPPLSEWVLEAMSSMGFARMTPVQASAIPLFMAHKDVVVEAVTGSGKTLSFLLPIVEKLLRLEEPIKKHHIGAIIISPTRELASQIHSVMQSLLAFHPPSAAAMTPLDDDDAPRQKFPSSTLKVVPQLLLGGSTTPAEDLSRFLKLSPNVLVSTPGRLLELLSSPHVHCPQSSFEMLVLDEADRLLDLGFKETLQNILRRLPKQRRTGLFSASVSEAVDQIVRVGLRNPVKIMVKVKGTSGVDDKRTPASLQMTYLSTPPLHKFAALKNILSSVQPTPQKSIFFVSTCSGVDYLSAILPLLLGDDFLLIPLHGKHQANVRQKNFNRFLSSHSPAILLTTDVASRGLDIPSVDLVVQIDPPSDPKTFIHRCGRAGRAGRRGLSVVMLHPGREEDYVSFLDVRKTPVVPFSPSISFSDADATSATARARKAVLADRALHDRGQKAFVSWLRSYSKHQASSIFRVADLDWEALGKAWGLLKLPKMPELRSFTGDKTLGVSLDWDNFSYKDKQREKRRKELLQEAAESGVSQPSSNKRRASESVAWSQNAENKNKKLQRREYKKLKQEKTKWENMTEEERQKARETKEMVEELRAKNLEERRFRQAAAKAETAKAGGEDEEFKGFD</sequence>
<feature type="chain" id="PRO_0000282703" description="ATP-dependent rRNA helicase spb4">
    <location>
        <begin position="1"/>
        <end position="639"/>
    </location>
</feature>
<feature type="domain" description="Helicase ATP-binding" evidence="3">
    <location>
        <begin position="45"/>
        <end position="249"/>
    </location>
</feature>
<feature type="domain" description="Helicase C-terminal" evidence="4">
    <location>
        <begin position="283"/>
        <end position="437"/>
    </location>
</feature>
<feature type="region of interest" description="Disordered" evidence="5">
    <location>
        <begin position="531"/>
        <end position="601"/>
    </location>
</feature>
<feature type="region of interest" description="Disordered" evidence="5">
    <location>
        <begin position="620"/>
        <end position="639"/>
    </location>
</feature>
<feature type="coiled-coil region" evidence="2">
    <location>
        <begin position="561"/>
        <end position="624"/>
    </location>
</feature>
<feature type="short sequence motif" description="Q motif" evidence="6">
    <location>
        <begin position="14"/>
        <end position="42"/>
    </location>
</feature>
<feature type="short sequence motif" description="DEAD box" evidence="6">
    <location>
        <begin position="197"/>
        <end position="200"/>
    </location>
</feature>
<feature type="compositionally biased region" description="Basic and acidic residues" evidence="5">
    <location>
        <begin position="577"/>
        <end position="601"/>
    </location>
</feature>
<feature type="binding site" evidence="3">
    <location>
        <begin position="58"/>
        <end position="65"/>
    </location>
    <ligand>
        <name>ATP</name>
        <dbReference type="ChEBI" id="CHEBI:30616"/>
    </ligand>
</feature>
<keyword id="KW-0067">ATP-binding</keyword>
<keyword id="KW-0175">Coiled coil</keyword>
<keyword id="KW-0347">Helicase</keyword>
<keyword id="KW-0378">Hydrolase</keyword>
<keyword id="KW-0547">Nucleotide-binding</keyword>
<keyword id="KW-0539">Nucleus</keyword>
<keyword id="KW-1185">Reference proteome</keyword>
<keyword id="KW-0690">Ribosome biogenesis</keyword>
<keyword id="KW-0694">RNA-binding</keyword>
<keyword id="KW-0698">rRNA processing</keyword>
<reference key="1">
    <citation type="journal article" date="2008" name="PLoS Genet.">
        <title>Genomic islands in the pathogenic filamentous fungus Aspergillus fumigatus.</title>
        <authorList>
            <person name="Fedorova N.D."/>
            <person name="Khaldi N."/>
            <person name="Joardar V.S."/>
            <person name="Maiti R."/>
            <person name="Amedeo P."/>
            <person name="Anderson M.J."/>
            <person name="Crabtree J."/>
            <person name="Silva J.C."/>
            <person name="Badger J.H."/>
            <person name="Albarraq A."/>
            <person name="Angiuoli S."/>
            <person name="Bussey H."/>
            <person name="Bowyer P."/>
            <person name="Cotty P.J."/>
            <person name="Dyer P.S."/>
            <person name="Egan A."/>
            <person name="Galens K."/>
            <person name="Fraser-Liggett C.M."/>
            <person name="Haas B.J."/>
            <person name="Inman J.M."/>
            <person name="Kent R."/>
            <person name="Lemieux S."/>
            <person name="Malavazi I."/>
            <person name="Orvis J."/>
            <person name="Roemer T."/>
            <person name="Ronning C.M."/>
            <person name="Sundaram J.P."/>
            <person name="Sutton G."/>
            <person name="Turner G."/>
            <person name="Venter J.C."/>
            <person name="White O.R."/>
            <person name="Whitty B.R."/>
            <person name="Youngman P."/>
            <person name="Wolfe K.H."/>
            <person name="Goldman G.H."/>
            <person name="Wortman J.R."/>
            <person name="Jiang B."/>
            <person name="Denning D.W."/>
            <person name="Nierman W.C."/>
        </authorList>
    </citation>
    <scope>NUCLEOTIDE SEQUENCE [LARGE SCALE GENOMIC DNA]</scope>
    <source>
        <strain>ATCC 1007 / CBS 513.65 / DSM 816 / NCTC 3887 / NRRL 1 / QM 1276 / 107</strain>
    </source>
</reference>
<gene>
    <name evidence="1" type="primary">spb4</name>
    <name type="ORF">ACLA_040990</name>
</gene>
<proteinExistence type="inferred from homology"/>
<comment type="function">
    <text evidence="1">ATP-binding RNA helicase involved in the biogenesis of 60S ribosomal subunits. Binds 90S pre-ribosomal particles and dissociates from pre-60S ribosomal particles after processing of 27SB pre-rRNA. Required for the normal formation of 18S rRNA through the processing of pre-rRNAs at sites A0, A1 and A2, and the normal formation of 25S and 5.8S rRNAs through the processing of pre-rRNAs at sites C1 and C2.</text>
</comment>
<comment type="catalytic activity">
    <reaction evidence="1">
        <text>ATP + H2O = ADP + phosphate + H(+)</text>
        <dbReference type="Rhea" id="RHEA:13065"/>
        <dbReference type="ChEBI" id="CHEBI:15377"/>
        <dbReference type="ChEBI" id="CHEBI:15378"/>
        <dbReference type="ChEBI" id="CHEBI:30616"/>
        <dbReference type="ChEBI" id="CHEBI:43474"/>
        <dbReference type="ChEBI" id="CHEBI:456216"/>
        <dbReference type="EC" id="3.6.4.13"/>
    </reaction>
</comment>
<comment type="subunit">
    <text evidence="1">Component of pre-60S ribosomal complexes.</text>
</comment>
<comment type="subcellular location">
    <subcellularLocation>
        <location evidence="1">Nucleus</location>
        <location evidence="1">Nucleolus</location>
    </subcellularLocation>
</comment>
<comment type="domain">
    <text>The Q motif is unique to and characteristic of the DEAD box family of RNA helicases and controls ATP binding and hydrolysis.</text>
</comment>
<comment type="similarity">
    <text evidence="6">Belongs to the DEAD box helicase family. DDX55/SPB4 subfamily.</text>
</comment>
<organism>
    <name type="scientific">Aspergillus clavatus (strain ATCC 1007 / CBS 513.65 / DSM 816 / NCTC 3887 / NRRL 1 / QM 1276 / 107)</name>
    <dbReference type="NCBI Taxonomy" id="344612"/>
    <lineage>
        <taxon>Eukaryota</taxon>
        <taxon>Fungi</taxon>
        <taxon>Dikarya</taxon>
        <taxon>Ascomycota</taxon>
        <taxon>Pezizomycotina</taxon>
        <taxon>Eurotiomycetes</taxon>
        <taxon>Eurotiomycetidae</taxon>
        <taxon>Eurotiales</taxon>
        <taxon>Aspergillaceae</taxon>
        <taxon>Aspergillus</taxon>
        <taxon>Aspergillus subgen. Fumigati</taxon>
    </lineage>
</organism>